<protein>
    <recommendedName>
        <fullName>U6-lycotoxin-Ls1d</fullName>
    </recommendedName>
    <alternativeName>
        <fullName>Toxin-like structure LSTX-F7</fullName>
    </alternativeName>
</protein>
<dbReference type="EMBL" id="EU926041">
    <property type="protein sequence ID" value="ACI41373.1"/>
    <property type="molecule type" value="mRNA"/>
</dbReference>
<dbReference type="EMBL" id="FM864045">
    <property type="protein sequence ID" value="CAS03642.1"/>
    <property type="molecule type" value="mRNA"/>
</dbReference>
<dbReference type="SMR" id="B6DCV7"/>
<dbReference type="ArachnoServer" id="AS000975">
    <property type="toxin name" value="U6-lycotoxin-Ls1d"/>
</dbReference>
<dbReference type="GO" id="GO:0005576">
    <property type="term" value="C:extracellular region"/>
    <property type="evidence" value="ECO:0007669"/>
    <property type="project" value="UniProtKB-SubCell"/>
</dbReference>
<dbReference type="GO" id="GO:0090729">
    <property type="term" value="F:toxin activity"/>
    <property type="evidence" value="ECO:0007669"/>
    <property type="project" value="UniProtKB-KW"/>
</dbReference>
<dbReference type="InterPro" id="IPR019553">
    <property type="entry name" value="Spider_toxin_CSTX_knottin"/>
</dbReference>
<dbReference type="Pfam" id="PF10530">
    <property type="entry name" value="Toxin_35"/>
    <property type="match status" value="1"/>
</dbReference>
<accession>B6DCV7</accession>
<reference key="1">
    <citation type="journal article" date="2010" name="Zoology">
        <title>Transcriptome analysis of the venom glands of the Chinese wolf spider Lycosa singoriensis.</title>
        <authorList>
            <person name="Zhang Y."/>
            <person name="Chen J."/>
            <person name="Tang X."/>
            <person name="Wang F."/>
            <person name="Jiang L."/>
            <person name="Xiong X."/>
            <person name="Wang M."/>
            <person name="Rong M."/>
            <person name="Liu Z."/>
            <person name="Liang S."/>
        </authorList>
    </citation>
    <scope>NUCLEOTIDE SEQUENCE [LARGE SCALE MRNA]</scope>
    <source>
        <tissue>Venom gland</tissue>
    </source>
</reference>
<comment type="subcellular location">
    <subcellularLocation>
        <location evidence="1">Secreted</location>
    </subcellularLocation>
</comment>
<comment type="tissue specificity">
    <text>Expressed by the venom gland.</text>
</comment>
<comment type="PTM">
    <text evidence="1">Contains 4 disulfide bonds.</text>
</comment>
<comment type="similarity">
    <text evidence="3">Belongs to the neurotoxin 19 (CSTX) family. 06 (U6-Lctx) subfamily.</text>
</comment>
<proteinExistence type="evidence at transcript level"/>
<sequence>MKLLLFTALVLVVISLVEVEAENERACIPLEKECTKTPGNCCSGLKCDCYRRFEQGVAKGIQCWCIEKDVTYKGV</sequence>
<feature type="signal peptide" evidence="2">
    <location>
        <begin position="1"/>
        <end position="21"/>
    </location>
</feature>
<feature type="propeptide" id="PRO_0000401735" evidence="1">
    <location>
        <begin position="22"/>
        <end position="25"/>
    </location>
</feature>
<feature type="chain" id="PRO_0000401736" description="U6-lycotoxin-Ls1d">
    <location>
        <begin position="26"/>
        <end position="75"/>
    </location>
</feature>
<keyword id="KW-1015">Disulfide bond</keyword>
<keyword id="KW-0964">Secreted</keyword>
<keyword id="KW-0732">Signal</keyword>
<keyword id="KW-0800">Toxin</keyword>
<evidence type="ECO:0000250" key="1"/>
<evidence type="ECO:0000255" key="2"/>
<evidence type="ECO:0000305" key="3"/>
<name>TX607_LYCSI</name>
<organism>
    <name type="scientific">Lycosa singoriensis</name>
    <name type="common">Wolf spider</name>
    <name type="synonym">Aranea singoriensis</name>
    <dbReference type="NCBI Taxonomy" id="434756"/>
    <lineage>
        <taxon>Eukaryota</taxon>
        <taxon>Metazoa</taxon>
        <taxon>Ecdysozoa</taxon>
        <taxon>Arthropoda</taxon>
        <taxon>Chelicerata</taxon>
        <taxon>Arachnida</taxon>
        <taxon>Araneae</taxon>
        <taxon>Araneomorphae</taxon>
        <taxon>Entelegynae</taxon>
        <taxon>Lycosoidea</taxon>
        <taxon>Lycosidae</taxon>
        <taxon>Lycosa</taxon>
    </lineage>
</organism>